<keyword id="KW-0175">Coiled coil</keyword>
<keyword id="KW-0378">Hydrolase</keyword>
<keyword id="KW-0496">Mitochondrion</keyword>
<keyword id="KW-1185">Reference proteome</keyword>
<keyword id="KW-0808">Transferase</keyword>
<keyword id="KW-0809">Transit peptide</keyword>
<sequence length="391" mass="45069">MFFTKVLNNQVANGLKQLPVHKRVQMAYDLHIPNKTVNPNLNIRSHEPIVFVHGIFGSKKNYRHDCQKIANVTHTPVYTIDLRNHGQSMHALPFDYETLAQDVTDFCEDHGLKKVNLIGYSLGAKICMLTMLQNPDLVRSGVIIDNSPIEQPHIEIFLTQFIKSMLHVLNSTKIRADDKDWKSKANQAMRRYIPNGGIRDYLLANLINKVPKGYKSPVINYDDGYIHFQNPVRHMTEVAVKNVSAWPTEHVKGLKFEGQVRFLKGTKSAFIDEKGLEAIKEYFPNYSLSELNATHFILNERPQEYVKLICDFIKVNRYKSLQEHIRHVENFSSAELEARHNAEHERQMEELRQLTQTTPTAEQVKTIDNLASKVDLSATERQQQQNKEITV</sequence>
<reference key="1">
    <citation type="journal article" date="2016" name="Proc. Natl. Acad. Sci. U.S.A.">
        <title>Comparative genomics of biotechnologically important yeasts.</title>
        <authorList>
            <person name="Riley R."/>
            <person name="Haridas S."/>
            <person name="Wolfe K.H."/>
            <person name="Lopes M.R."/>
            <person name="Hittinger C.T."/>
            <person name="Goeker M."/>
            <person name="Salamov A.A."/>
            <person name="Wisecaver J.H."/>
            <person name="Long T.M."/>
            <person name="Calvey C.H."/>
            <person name="Aerts A.L."/>
            <person name="Barry K.W."/>
            <person name="Choi C."/>
            <person name="Clum A."/>
            <person name="Coughlan A.Y."/>
            <person name="Deshpande S."/>
            <person name="Douglass A.P."/>
            <person name="Hanson S.J."/>
            <person name="Klenk H.-P."/>
            <person name="LaButti K.M."/>
            <person name="Lapidus A."/>
            <person name="Lindquist E.A."/>
            <person name="Lipzen A.M."/>
            <person name="Meier-Kolthoff J.P."/>
            <person name="Ohm R.A."/>
            <person name="Otillar R.P."/>
            <person name="Pangilinan J.L."/>
            <person name="Peng Y."/>
            <person name="Rokas A."/>
            <person name="Rosa C.A."/>
            <person name="Scheuner C."/>
            <person name="Sibirny A.A."/>
            <person name="Slot J.C."/>
            <person name="Stielow J.B."/>
            <person name="Sun H."/>
            <person name="Kurtzman C.P."/>
            <person name="Blackwell M."/>
            <person name="Grigoriev I.V."/>
            <person name="Jeffries T.W."/>
        </authorList>
    </citation>
    <scope>NUCLEOTIDE SEQUENCE [LARGE SCALE GENOMIC DNA]</scope>
    <source>
        <strain>ATCC 58044 / CBS 1984 / NCYC 433 / NRRL Y-366-8</strain>
    </source>
</reference>
<reference key="2">
    <citation type="journal article" date="2017" name="Metab. Eng.">
        <title>Ethyl acetate production by the elusive alcohol acetyltransferase from yeast.</title>
        <authorList>
            <person name="Kruis A.J."/>
            <person name="Levisson M."/>
            <person name="Mars A.E."/>
            <person name="van der Ploeg M."/>
            <person name="Garces Daza F."/>
            <person name="Ellena V."/>
            <person name="Kengen S.W.M."/>
            <person name="van der Oost J."/>
            <person name="Weusthuis R.A."/>
        </authorList>
    </citation>
    <scope>FUNCTION</scope>
    <scope>CATALYTIC ACTIVITY</scope>
    <scope>BIOPHYSICOCHEMICAL PROPERTIES</scope>
    <source>
        <strain>ATCC 8168 / CBS 5759 / DSM 6766 / JCM 3585 / NCYC 432 / NBRC 10213 / NRRL Y-366</strain>
    </source>
</reference>
<proteinExistence type="evidence at protein level"/>
<organism>
    <name type="scientific">Wickerhamomyces anomalus (strain ATCC 58044 / CBS 1984 / NCYC 433 / NRRL Y-366-8)</name>
    <name type="common">Yeast</name>
    <name type="synonym">Hansenula anomala</name>
    <dbReference type="NCBI Taxonomy" id="683960"/>
    <lineage>
        <taxon>Eukaryota</taxon>
        <taxon>Fungi</taxon>
        <taxon>Dikarya</taxon>
        <taxon>Ascomycota</taxon>
        <taxon>Saccharomycotina</taxon>
        <taxon>Saccharomycetes</taxon>
        <taxon>Phaffomycetales</taxon>
        <taxon>Wickerhamomycetaceae</taxon>
        <taxon>Wickerhamomyces</taxon>
    </lineage>
</organism>
<dbReference type="EC" id="2.3.1.268" evidence="2"/>
<dbReference type="EC" id="3.1.2.1"/>
<dbReference type="EC" id="3.1.1.-"/>
<dbReference type="EMBL" id="KV454208">
    <property type="protein sequence ID" value="ODQ61813.1"/>
    <property type="molecule type" value="Genomic_DNA"/>
</dbReference>
<dbReference type="RefSeq" id="XP_019041020.1">
    <property type="nucleotide sequence ID" value="XM_019181327.1"/>
</dbReference>
<dbReference type="SMR" id="A0A1E3P8S6"/>
<dbReference type="STRING" id="683960.A0A1E3P8S6"/>
<dbReference type="ESTHER" id="wicao-a0a1e3p8s6">
    <property type="family name" value="ABHD11-Acetyl_transferase"/>
</dbReference>
<dbReference type="GeneID" id="30198573"/>
<dbReference type="KEGG" id="ag:A0A1E3P8S6"/>
<dbReference type="OrthoDB" id="8119704at2759"/>
<dbReference type="BioCyc" id="MetaCyc:MONOMER-20221"/>
<dbReference type="BRENDA" id="2.3.1.268">
    <property type="organism ID" value="1135"/>
</dbReference>
<dbReference type="SABIO-RK" id="A0A1E3P8S6"/>
<dbReference type="Proteomes" id="UP000094112">
    <property type="component" value="Unassembled WGS sequence"/>
</dbReference>
<dbReference type="GO" id="GO:0005739">
    <property type="term" value="C:mitochondrion"/>
    <property type="evidence" value="ECO:0007669"/>
    <property type="project" value="UniProtKB-SubCell"/>
</dbReference>
<dbReference type="GO" id="GO:0003986">
    <property type="term" value="F:acetyl-CoA hydrolase activity"/>
    <property type="evidence" value="ECO:0007669"/>
    <property type="project" value="UniProtKB-EC"/>
</dbReference>
<dbReference type="GO" id="GO:0052689">
    <property type="term" value="F:carboxylic ester hydrolase activity"/>
    <property type="evidence" value="ECO:0007669"/>
    <property type="project" value="TreeGrafter"/>
</dbReference>
<dbReference type="GO" id="GO:0016740">
    <property type="term" value="F:transferase activity"/>
    <property type="evidence" value="ECO:0007669"/>
    <property type="project" value="UniProtKB-KW"/>
</dbReference>
<dbReference type="Gene3D" id="3.40.50.1820">
    <property type="entry name" value="alpha/beta hydrolase"/>
    <property type="match status" value="1"/>
</dbReference>
<dbReference type="InterPro" id="IPR000073">
    <property type="entry name" value="AB_hydrolase_1"/>
</dbReference>
<dbReference type="InterPro" id="IPR029058">
    <property type="entry name" value="AB_hydrolase_fold"/>
</dbReference>
<dbReference type="PANTHER" id="PTHR46118">
    <property type="entry name" value="PROTEIN ABHD11"/>
    <property type="match status" value="1"/>
</dbReference>
<dbReference type="PANTHER" id="PTHR46118:SF4">
    <property type="entry name" value="PROTEIN ABHD11"/>
    <property type="match status" value="1"/>
</dbReference>
<dbReference type="Pfam" id="PF00561">
    <property type="entry name" value="Abhydrolase_1"/>
    <property type="match status" value="1"/>
</dbReference>
<dbReference type="SUPFAM" id="SSF53474">
    <property type="entry name" value="alpha/beta-Hydrolases"/>
    <property type="match status" value="1"/>
</dbReference>
<gene>
    <name type="primary">EAT1</name>
    <name type="ORF">WICANDRAFT_27004</name>
</gene>
<accession>A0A1E3P8S6</accession>
<feature type="transit peptide" description="Mitochondrion" evidence="1">
    <location>
        <begin position="1"/>
        <end position="24"/>
    </location>
</feature>
<feature type="chain" id="PRO_0000446182" description="Ethanol acetyltransferase 1">
    <location>
        <begin position="25"/>
        <end position="391"/>
    </location>
</feature>
<feature type="domain" description="AB hydrolase-1" evidence="1">
    <location>
        <begin position="48"/>
        <end position="154"/>
    </location>
</feature>
<feature type="active site" description="Charge relay system" evidence="4">
    <location>
        <position position="121"/>
    </location>
</feature>
<feature type="active site" description="Charge relay system" evidence="4">
    <location>
        <position position="145"/>
    </location>
</feature>
<feature type="active site" description="Charge relay system" evidence="4">
    <location>
        <position position="295"/>
    </location>
</feature>
<name>EAT1_WICAA</name>
<comment type="function">
    <text evidence="2">Alcohol acetyltransferase that catalyzes the synthesis of ethyl acetate from ethanol and acetyl-CoA. Can also function as a thioesterase by hydrolyzing acetyl-CoA in the absence of ethanol, as well as esterase hydrolyzing ethyl acetate.</text>
</comment>
<comment type="catalytic activity">
    <reaction evidence="2">
        <text>ethanol + acetyl-CoA = ethyl acetate + CoA</text>
        <dbReference type="Rhea" id="RHEA:55972"/>
        <dbReference type="ChEBI" id="CHEBI:16236"/>
        <dbReference type="ChEBI" id="CHEBI:27750"/>
        <dbReference type="ChEBI" id="CHEBI:57287"/>
        <dbReference type="ChEBI" id="CHEBI:57288"/>
        <dbReference type="EC" id="2.3.1.268"/>
    </reaction>
</comment>
<comment type="catalytic activity">
    <reaction evidence="2">
        <text>acetyl-CoA + H2O = acetate + CoA + H(+)</text>
        <dbReference type="Rhea" id="RHEA:20289"/>
        <dbReference type="ChEBI" id="CHEBI:15377"/>
        <dbReference type="ChEBI" id="CHEBI:15378"/>
        <dbReference type="ChEBI" id="CHEBI:30089"/>
        <dbReference type="ChEBI" id="CHEBI:57287"/>
        <dbReference type="ChEBI" id="CHEBI:57288"/>
        <dbReference type="EC" id="3.1.2.1"/>
    </reaction>
</comment>
<comment type="catalytic activity">
    <reaction evidence="2">
        <text>ethyl acetate + H2O = ethanol + acetate + H(+)</text>
        <dbReference type="Rhea" id="RHEA:58148"/>
        <dbReference type="ChEBI" id="CHEBI:15377"/>
        <dbReference type="ChEBI" id="CHEBI:15378"/>
        <dbReference type="ChEBI" id="CHEBI:16236"/>
        <dbReference type="ChEBI" id="CHEBI:27750"/>
        <dbReference type="ChEBI" id="CHEBI:30089"/>
    </reaction>
</comment>
<comment type="activity regulation">
    <text evidence="2">By ethanol. Thioesterase and esterase reactions are highly repressed in the presence of high ethanol concentrations.</text>
</comment>
<comment type="biophysicochemical properties">
    <kinetics>
        <KM evidence="2">3.12 mM for acetyl-CoA (for acetyl-CoA hydrolase reaction)</KM>
        <KM evidence="2">2.43 mM for ethanol (for alcohol acetyltransferase reaction)</KM>
    </kinetics>
</comment>
<comment type="subcellular location">
    <subcellularLocation>
        <location>Mitochondrion</location>
    </subcellularLocation>
</comment>
<comment type="biotechnology">
    <text evidence="4">In contrast to S.cerevisiae, W.anomalous is a better ethyl acetate producing yeast. Ethyl acetate is an important industrial compound, used as a chemical solvent applied in the synthesis of biodiesels, paints, adhesives, herbicides and resins. It is also popular because it is relatively non-toxic and fully biodegradable. However, the sustainability of the ethyl acetate industry is severely hampered by the current energy intensive production processes that are based exclusively on petrochemical resources. Ethanol acetyltransferase may be a target for an efficient biobased alternative production process.</text>
</comment>
<comment type="similarity">
    <text evidence="3">Belongs to the AB hydrolase superfamily.</text>
</comment>
<evidence type="ECO:0000255" key="1"/>
<evidence type="ECO:0000269" key="2">
    <source>
    </source>
</evidence>
<evidence type="ECO:0000305" key="3"/>
<evidence type="ECO:0000305" key="4">
    <source>
    </source>
</evidence>
<protein>
    <recommendedName>
        <fullName>Ethanol acetyltransferase 1</fullName>
        <ecNumber evidence="2">2.3.1.268</ecNumber>
    </recommendedName>
    <alternativeName>
        <fullName>Acetyl-CoA hydrolase</fullName>
        <ecNumber>3.1.2.1</ecNumber>
    </alternativeName>
    <alternativeName>
        <fullName>Acetyl-CoA thioesterase</fullName>
    </alternativeName>
    <alternativeName>
        <fullName>Alcohol acetyltransferase</fullName>
        <shortName>AAT</shortName>
    </alternativeName>
    <alternativeName>
        <fullName>Ethyl acetate esterase</fullName>
        <ecNumber>3.1.1.-</ecNumber>
    </alternativeName>
</protein>